<name>BUN62_SCHPO</name>
<keyword id="KW-0963">Cytoplasm</keyword>
<keyword id="KW-0539">Nucleus</keyword>
<keyword id="KW-0597">Phosphoprotein</keyword>
<keyword id="KW-1185">Reference proteome</keyword>
<keyword id="KW-0677">Repeat</keyword>
<keyword id="KW-0853">WD repeat</keyword>
<dbReference type="EMBL" id="CU329670">
    <property type="protein sequence ID" value="CAA94693.1"/>
    <property type="molecule type" value="Genomic_DNA"/>
</dbReference>
<dbReference type="PIR" id="T37570">
    <property type="entry name" value="T37570"/>
</dbReference>
<dbReference type="RefSeq" id="NP_594635.1">
    <property type="nucleotide sequence ID" value="NM_001020063.2"/>
</dbReference>
<dbReference type="SMR" id="Q10437"/>
<dbReference type="BioGRID" id="279390">
    <property type="interactions" value="44"/>
</dbReference>
<dbReference type="FunCoup" id="Q10437">
    <property type="interactions" value="101"/>
</dbReference>
<dbReference type="STRING" id="284812.Q10437"/>
<dbReference type="iPTMnet" id="Q10437"/>
<dbReference type="PaxDb" id="4896-SPAC12B10.03.1"/>
<dbReference type="EnsemblFungi" id="SPAC12B10.03.1">
    <property type="protein sequence ID" value="SPAC12B10.03.1:pep"/>
    <property type="gene ID" value="SPAC12B10.03"/>
</dbReference>
<dbReference type="GeneID" id="2542950"/>
<dbReference type="KEGG" id="spo:2542950"/>
<dbReference type="PomBase" id="SPAC12B10.03">
    <property type="gene designation" value="bun62"/>
</dbReference>
<dbReference type="VEuPathDB" id="FungiDB:SPAC12B10.03"/>
<dbReference type="eggNOG" id="KOG2394">
    <property type="taxonomic scope" value="Eukaryota"/>
</dbReference>
<dbReference type="HOGENOM" id="CLU_016971_1_0_1"/>
<dbReference type="InParanoid" id="Q10437"/>
<dbReference type="OMA" id="MCVCWSP"/>
<dbReference type="PhylomeDB" id="Q10437"/>
<dbReference type="Reactome" id="R-SPO-5689880">
    <property type="pathway name" value="Ub-specific processing proteases"/>
</dbReference>
<dbReference type="PRO" id="PR:Q10437"/>
<dbReference type="Proteomes" id="UP000002485">
    <property type="component" value="Chromosome I"/>
</dbReference>
<dbReference type="GO" id="GO:0032153">
    <property type="term" value="C:cell division site"/>
    <property type="evidence" value="ECO:0007005"/>
    <property type="project" value="PomBase"/>
</dbReference>
<dbReference type="GO" id="GO:0051286">
    <property type="term" value="C:cell tip"/>
    <property type="evidence" value="ECO:0007005"/>
    <property type="project" value="PomBase"/>
</dbReference>
<dbReference type="GO" id="GO:0005829">
    <property type="term" value="C:cytosol"/>
    <property type="evidence" value="ECO:0007005"/>
    <property type="project" value="PomBase"/>
</dbReference>
<dbReference type="GO" id="GO:0005634">
    <property type="term" value="C:nucleus"/>
    <property type="evidence" value="ECO:0007005"/>
    <property type="project" value="PomBase"/>
</dbReference>
<dbReference type="GO" id="GO:0045013">
    <property type="term" value="P:carbon catabolite repression of transcription"/>
    <property type="evidence" value="ECO:0000318"/>
    <property type="project" value="GO_Central"/>
</dbReference>
<dbReference type="FunFam" id="2.130.10.10:FF:001883">
    <property type="entry name" value="WD40-repeat-containing domain protein"/>
    <property type="match status" value="1"/>
</dbReference>
<dbReference type="Gene3D" id="2.130.10.10">
    <property type="entry name" value="YVTN repeat-like/Quinoprotein amine dehydrogenase"/>
    <property type="match status" value="1"/>
</dbReference>
<dbReference type="InterPro" id="IPR024977">
    <property type="entry name" value="Apc4-like_WD40_dom"/>
</dbReference>
<dbReference type="InterPro" id="IPR015943">
    <property type="entry name" value="WD40/YVTN_repeat-like_dom_sf"/>
</dbReference>
<dbReference type="InterPro" id="IPR036322">
    <property type="entry name" value="WD40_repeat_dom_sf"/>
</dbReference>
<dbReference type="InterPro" id="IPR001680">
    <property type="entry name" value="WD40_rpt"/>
</dbReference>
<dbReference type="InterPro" id="IPR051362">
    <property type="entry name" value="WD_repeat_creC_regulators"/>
</dbReference>
<dbReference type="PANTHER" id="PTHR14107:SF16">
    <property type="entry name" value="AT02583P"/>
    <property type="match status" value="1"/>
</dbReference>
<dbReference type="PANTHER" id="PTHR14107">
    <property type="entry name" value="WD REPEAT PROTEIN"/>
    <property type="match status" value="1"/>
</dbReference>
<dbReference type="Pfam" id="PF12894">
    <property type="entry name" value="ANAPC4_WD40"/>
    <property type="match status" value="1"/>
</dbReference>
<dbReference type="SMART" id="SM00320">
    <property type="entry name" value="WD40"/>
    <property type="match status" value="6"/>
</dbReference>
<dbReference type="SUPFAM" id="SSF50978">
    <property type="entry name" value="WD40 repeat-like"/>
    <property type="match status" value="1"/>
</dbReference>
<dbReference type="PROSITE" id="PS00678">
    <property type="entry name" value="WD_REPEATS_1"/>
    <property type="match status" value="1"/>
</dbReference>
<dbReference type="PROSITE" id="PS50294">
    <property type="entry name" value="WD_REPEATS_REGION"/>
    <property type="match status" value="1"/>
</dbReference>
<evidence type="ECO:0000269" key="1">
    <source>
    </source>
</evidence>
<evidence type="ECO:0000269" key="2">
    <source>
    </source>
</evidence>
<comment type="function">
    <text evidence="2">Required for the ubp9 recruitment to septa and cell tips but also for its enzymatic activity at these specific locations.</text>
</comment>
<comment type="subunit">
    <text evidence="2">Interacts with ubp9 and bun107.</text>
</comment>
<comment type="subcellular location">
    <subcellularLocation>
        <location>Nucleus</location>
    </subcellularLocation>
    <subcellularLocation>
        <location>Cytoplasm</location>
    </subcellularLocation>
    <subcellularLocation>
        <location>Cell tip</location>
    </subcellularLocation>
</comment>
<organism>
    <name type="scientific">Schizosaccharomyces pombe (strain 972 / ATCC 24843)</name>
    <name type="common">Fission yeast</name>
    <dbReference type="NCBI Taxonomy" id="284812"/>
    <lineage>
        <taxon>Eukaryota</taxon>
        <taxon>Fungi</taxon>
        <taxon>Dikarya</taxon>
        <taxon>Ascomycota</taxon>
        <taxon>Taphrinomycotina</taxon>
        <taxon>Schizosaccharomycetes</taxon>
        <taxon>Schizosaccharomycetales</taxon>
        <taxon>Schizosaccharomycetaceae</taxon>
        <taxon>Schizosaccharomyces</taxon>
    </lineage>
</organism>
<feature type="chain" id="PRO_0000051493" description="UBP9-binding protein bun62">
    <location>
        <begin position="1"/>
        <end position="543"/>
    </location>
</feature>
<feature type="repeat" description="WD 1">
    <location>
        <begin position="239"/>
        <end position="279"/>
    </location>
</feature>
<feature type="repeat" description="WD 2">
    <location>
        <begin position="320"/>
        <end position="361"/>
    </location>
</feature>
<feature type="repeat" description="WD 3">
    <location>
        <begin position="362"/>
        <end position="401"/>
    </location>
</feature>
<feature type="repeat" description="WD 4">
    <location>
        <begin position="404"/>
        <end position="448"/>
    </location>
</feature>
<feature type="repeat" description="WD 5">
    <location>
        <begin position="513"/>
        <end position="542"/>
    </location>
</feature>
<feature type="modified residue" description="Phosphoserine" evidence="1">
    <location>
        <position position="43"/>
    </location>
</feature>
<protein>
    <recommendedName>
        <fullName>UBP9-binding protein bun62</fullName>
    </recommendedName>
    <alternativeName>
        <fullName>Binding ubp9 protein of 62 kDa</fullName>
    </alternativeName>
</protein>
<accession>Q10437</accession>
<reference key="1">
    <citation type="journal article" date="2002" name="Nature">
        <title>The genome sequence of Schizosaccharomyces pombe.</title>
        <authorList>
            <person name="Wood V."/>
            <person name="Gwilliam R."/>
            <person name="Rajandream M.A."/>
            <person name="Lyne M.H."/>
            <person name="Lyne R."/>
            <person name="Stewart A."/>
            <person name="Sgouros J.G."/>
            <person name="Peat N."/>
            <person name="Hayles J."/>
            <person name="Baker S.G."/>
            <person name="Basham D."/>
            <person name="Bowman S."/>
            <person name="Brooks K."/>
            <person name="Brown D."/>
            <person name="Brown S."/>
            <person name="Chillingworth T."/>
            <person name="Churcher C.M."/>
            <person name="Collins M."/>
            <person name="Connor R."/>
            <person name="Cronin A."/>
            <person name="Davis P."/>
            <person name="Feltwell T."/>
            <person name="Fraser A."/>
            <person name="Gentles S."/>
            <person name="Goble A."/>
            <person name="Hamlin N."/>
            <person name="Harris D.E."/>
            <person name="Hidalgo J."/>
            <person name="Hodgson G."/>
            <person name="Holroyd S."/>
            <person name="Hornsby T."/>
            <person name="Howarth S."/>
            <person name="Huckle E.J."/>
            <person name="Hunt S."/>
            <person name="Jagels K."/>
            <person name="James K.D."/>
            <person name="Jones L."/>
            <person name="Jones M."/>
            <person name="Leather S."/>
            <person name="McDonald S."/>
            <person name="McLean J."/>
            <person name="Mooney P."/>
            <person name="Moule S."/>
            <person name="Mungall K.L."/>
            <person name="Murphy L.D."/>
            <person name="Niblett D."/>
            <person name="Odell C."/>
            <person name="Oliver K."/>
            <person name="O'Neil S."/>
            <person name="Pearson D."/>
            <person name="Quail M.A."/>
            <person name="Rabbinowitsch E."/>
            <person name="Rutherford K.M."/>
            <person name="Rutter S."/>
            <person name="Saunders D."/>
            <person name="Seeger K."/>
            <person name="Sharp S."/>
            <person name="Skelton J."/>
            <person name="Simmonds M.N."/>
            <person name="Squares R."/>
            <person name="Squares S."/>
            <person name="Stevens K."/>
            <person name="Taylor K."/>
            <person name="Taylor R.G."/>
            <person name="Tivey A."/>
            <person name="Walsh S.V."/>
            <person name="Warren T."/>
            <person name="Whitehead S."/>
            <person name="Woodward J.R."/>
            <person name="Volckaert G."/>
            <person name="Aert R."/>
            <person name="Robben J."/>
            <person name="Grymonprez B."/>
            <person name="Weltjens I."/>
            <person name="Vanstreels E."/>
            <person name="Rieger M."/>
            <person name="Schaefer M."/>
            <person name="Mueller-Auer S."/>
            <person name="Gabel C."/>
            <person name="Fuchs M."/>
            <person name="Duesterhoeft A."/>
            <person name="Fritzc C."/>
            <person name="Holzer E."/>
            <person name="Moestl D."/>
            <person name="Hilbert H."/>
            <person name="Borzym K."/>
            <person name="Langer I."/>
            <person name="Beck A."/>
            <person name="Lehrach H."/>
            <person name="Reinhardt R."/>
            <person name="Pohl T.M."/>
            <person name="Eger P."/>
            <person name="Zimmermann W."/>
            <person name="Wedler H."/>
            <person name="Wambutt R."/>
            <person name="Purnelle B."/>
            <person name="Goffeau A."/>
            <person name="Cadieu E."/>
            <person name="Dreano S."/>
            <person name="Gloux S."/>
            <person name="Lelaure V."/>
            <person name="Mottier S."/>
            <person name="Galibert F."/>
            <person name="Aves S.J."/>
            <person name="Xiang Z."/>
            <person name="Hunt C."/>
            <person name="Moore K."/>
            <person name="Hurst S.M."/>
            <person name="Lucas M."/>
            <person name="Rochet M."/>
            <person name="Gaillardin C."/>
            <person name="Tallada V.A."/>
            <person name="Garzon A."/>
            <person name="Thode G."/>
            <person name="Daga R.R."/>
            <person name="Cruzado L."/>
            <person name="Jimenez J."/>
            <person name="Sanchez M."/>
            <person name="del Rey F."/>
            <person name="Benito J."/>
            <person name="Dominguez A."/>
            <person name="Revuelta J.L."/>
            <person name="Moreno S."/>
            <person name="Armstrong J."/>
            <person name="Forsburg S.L."/>
            <person name="Cerutti L."/>
            <person name="Lowe T."/>
            <person name="McCombie W.R."/>
            <person name="Paulsen I."/>
            <person name="Potashkin J."/>
            <person name="Shpakovski G.V."/>
            <person name="Ussery D."/>
            <person name="Barrell B.G."/>
            <person name="Nurse P."/>
        </authorList>
    </citation>
    <scope>NUCLEOTIDE SEQUENCE [LARGE SCALE GENOMIC DNA]</scope>
    <source>
        <strain>972 / ATCC 24843</strain>
    </source>
</reference>
<reference key="2">
    <citation type="journal article" date="2006" name="Nat. Biotechnol.">
        <title>ORFeome cloning and global analysis of protein localization in the fission yeast Schizosaccharomyces pombe.</title>
        <authorList>
            <person name="Matsuyama A."/>
            <person name="Arai R."/>
            <person name="Yashiroda Y."/>
            <person name="Shirai A."/>
            <person name="Kamata A."/>
            <person name="Sekido S."/>
            <person name="Kobayashi Y."/>
            <person name="Hashimoto A."/>
            <person name="Hamamoto M."/>
            <person name="Hiraoka Y."/>
            <person name="Horinouchi S."/>
            <person name="Yoshida M."/>
        </authorList>
    </citation>
    <scope>SUBCELLULAR LOCATION [LARGE SCALE ANALYSIS]</scope>
</reference>
<reference key="3">
    <citation type="journal article" date="2008" name="J. Proteome Res.">
        <title>Phosphoproteome analysis of fission yeast.</title>
        <authorList>
            <person name="Wilson-Grady J.T."/>
            <person name="Villen J."/>
            <person name="Gygi S.P."/>
        </authorList>
    </citation>
    <scope>PHOSPHORYLATION [LARGE SCALE ANALYSIS] AT SER-43</scope>
    <scope>IDENTIFICATION BY MASS SPECTROMETRY</scope>
</reference>
<reference key="4">
    <citation type="journal article" date="2010" name="PLoS Biol.">
        <title>A global census of fission yeast deubiquitinating enzyme localization and interaction networks reveals distinct compartmentalization profiles and overlapping functions in endocytosis and polarity.</title>
        <authorList>
            <person name="Kouranti I."/>
            <person name="McLean J.R."/>
            <person name="Feoktistova A."/>
            <person name="Liang P."/>
            <person name="Johnson A.E."/>
            <person name="Roberts-Galbraith R.H."/>
            <person name="Gould K.L."/>
        </authorList>
    </citation>
    <scope>FUNCTION</scope>
    <scope>SUBCELLULAR LOCATION</scope>
    <scope>PHOSPHORYLATION</scope>
    <scope>INTERACTION WITH BUN107 AND UBP9</scope>
</reference>
<proteinExistence type="evidence at protein level"/>
<sequence length="543" mass="61811">MQTMSSGIARPVLFLTAREGEYVLKDEFQLGSSSRSTPQITGSPLDPNTPVKRLFFMRINIAQFSRWDYPYPREYIEELKKIHGVHHVEENRDVPSILENYRNSKRKSHNFSSSNTPYLKLHRPASRAGAPLINAKSFISSLTFHDNIVRSFQPSIHGKTFVFANHEKSFYWLDVSAANSHSALLKMEFPRASPVCHDINSFTKSPKGLDVIIGFDTGDVLWYDPINFKYLRFNKNGQLNSSSVTAIKWVAGKDSQFLVSFRNGWLVLYDKYRHEQPLHIVVPEKNLKSLYLSSPGTFNILISINHRDDRKLNPVACYAFSKSPINGFCFSPDYQYLALVSERGTLKLFDFVKEHVLDVFHSYFAGLTCVTWSPDGKFIAIGGKDDLVSIYSFPLRKLVARCQGHKSWVTDVIFDAWRCDDDNYRIASVGLDRKLLLWDFSVSAIHRPKSAVYYVNHHSNNSKPAISDFDDVGDLTMGSEIDNSNYVNGDITIHPTLSRSLIPVISPITIYDVDDSPLSSVFFDPDCMITCATNGRIRTWQRP</sequence>
<gene>
    <name type="primary">bun62</name>
    <name type="synonym">wdr20</name>
    <name type="ORF">SPAC12B10.03</name>
</gene>